<proteinExistence type="evidence at protein level"/>
<keyword id="KW-0472">Membrane</keyword>
<keyword id="KW-1267">Proteomics identification</keyword>
<keyword id="KW-1185">Reference proteome</keyword>
<keyword id="KW-0812">Transmembrane</keyword>
<keyword id="KW-1133">Transmembrane helix</keyword>
<feature type="chain" id="PRO_0000349377" description="CMT1A duplicated region transcript 15 protein-like protein">
    <location>
        <begin position="1"/>
        <end position="281"/>
    </location>
</feature>
<feature type="transmembrane region" description="Helical" evidence="1">
    <location>
        <begin position="207"/>
        <end position="227"/>
    </location>
</feature>
<feature type="region of interest" description="Disordered" evidence="2">
    <location>
        <begin position="107"/>
        <end position="131"/>
    </location>
</feature>
<feature type="region of interest" description="Disordered" evidence="2">
    <location>
        <begin position="150"/>
        <end position="187"/>
    </location>
</feature>
<feature type="compositionally biased region" description="Basic and acidic residues" evidence="2">
    <location>
        <begin position="108"/>
        <end position="120"/>
    </location>
</feature>
<feature type="compositionally biased region" description="Low complexity" evidence="2">
    <location>
        <begin position="165"/>
        <end position="178"/>
    </location>
</feature>
<organism>
    <name type="scientific">Homo sapiens</name>
    <name type="common">Human</name>
    <dbReference type="NCBI Taxonomy" id="9606"/>
    <lineage>
        <taxon>Eukaryota</taxon>
        <taxon>Metazoa</taxon>
        <taxon>Chordata</taxon>
        <taxon>Craniata</taxon>
        <taxon>Vertebrata</taxon>
        <taxon>Euteleostomi</taxon>
        <taxon>Mammalia</taxon>
        <taxon>Eutheria</taxon>
        <taxon>Euarchontoglires</taxon>
        <taxon>Primates</taxon>
        <taxon>Haplorrhini</taxon>
        <taxon>Catarrhini</taxon>
        <taxon>Hominidae</taxon>
        <taxon>Homo</taxon>
    </lineage>
</organism>
<dbReference type="EMBL" id="AC087499">
    <property type="status" value="NOT_ANNOTATED_CDS"/>
    <property type="molecule type" value="Genomic_DNA"/>
</dbReference>
<dbReference type="EMBL" id="AA446206">
    <property type="status" value="NOT_ANNOTATED_CDS"/>
    <property type="molecule type" value="mRNA"/>
</dbReference>
<dbReference type="CCDS" id="CCDS54096.1"/>
<dbReference type="RefSeq" id="NP_001177719.1">
    <property type="nucleotide sequence ID" value="NM_001190790.2"/>
</dbReference>
<dbReference type="BioGRID" id="129146">
    <property type="interactions" value="1"/>
</dbReference>
<dbReference type="FunCoup" id="A8MXV6">
    <property type="interactions" value="5"/>
</dbReference>
<dbReference type="IntAct" id="A8MXV6">
    <property type="interactions" value="1"/>
</dbReference>
<dbReference type="STRING" id="9606.ENSP00000382000"/>
<dbReference type="GlyCosmos" id="A8MXV6">
    <property type="glycosylation" value="1 site, 1 glycan"/>
</dbReference>
<dbReference type="GlyGen" id="A8MXV6">
    <property type="glycosylation" value="2 sites, 1 O-linked glycan (2 sites)"/>
</dbReference>
<dbReference type="iPTMnet" id="A8MXV6"/>
<dbReference type="PhosphoSitePlus" id="A8MXV6"/>
<dbReference type="BioMuta" id="CDRT15L2"/>
<dbReference type="jPOST" id="A8MXV6"/>
<dbReference type="MassIVE" id="A8MXV6"/>
<dbReference type="PaxDb" id="9606-ENSP00000382000"/>
<dbReference type="PeptideAtlas" id="A8MXV6"/>
<dbReference type="ProteomicsDB" id="2357"/>
<dbReference type="Antibodypedia" id="58329">
    <property type="antibodies" value="106 antibodies from 9 providers"/>
</dbReference>
<dbReference type="DNASU" id="256223"/>
<dbReference type="Ensembl" id="ENST00000399044.1">
    <property type="protein sequence ID" value="ENSP00000382000.1"/>
    <property type="gene ID" value="ENSG00000214819.2"/>
</dbReference>
<dbReference type="GeneID" id="256223"/>
<dbReference type="KEGG" id="hsa:256223"/>
<dbReference type="MANE-Select" id="ENST00000399044.1">
    <property type="protein sequence ID" value="ENSP00000382000.1"/>
    <property type="RefSeq nucleotide sequence ID" value="NM_001190790.2"/>
    <property type="RefSeq protein sequence ID" value="NP_001177719.1"/>
</dbReference>
<dbReference type="UCSC" id="uc021tsn.1">
    <property type="organism name" value="human"/>
</dbReference>
<dbReference type="AGR" id="HGNC:34074"/>
<dbReference type="AGR" id="HGNC:34075"/>
<dbReference type="CTD" id="256223"/>
<dbReference type="GeneCards" id="CDRT15L2"/>
<dbReference type="HGNC" id="HGNC:34075">
    <property type="gene designation" value="CDRT15L2"/>
</dbReference>
<dbReference type="HPA" id="ENSG00000214819">
    <property type="expression patterns" value="Tissue enriched (testis)"/>
</dbReference>
<dbReference type="neXtProt" id="NX_A8MXV6"/>
<dbReference type="VEuPathDB" id="HostDB:ENSG00000214819"/>
<dbReference type="eggNOG" id="ENOG502TF2R">
    <property type="taxonomic scope" value="Eukaryota"/>
</dbReference>
<dbReference type="GeneTree" id="ENSGT00390000011755"/>
<dbReference type="HOGENOM" id="CLU_087008_0_0_1"/>
<dbReference type="InParanoid" id="A8MXV6"/>
<dbReference type="OMA" id="PYTEIRA"/>
<dbReference type="OrthoDB" id="9470578at2759"/>
<dbReference type="PAN-GO" id="A8MXV6">
    <property type="GO annotations" value="0 GO annotations based on evolutionary models"/>
</dbReference>
<dbReference type="PhylomeDB" id="A8MXV6"/>
<dbReference type="TreeFam" id="TF342212"/>
<dbReference type="PathwayCommons" id="A8MXV6"/>
<dbReference type="BioGRID-ORCS" id="256223">
    <property type="hits" value="14 hits in 1099 CRISPR screens"/>
</dbReference>
<dbReference type="GenomeRNAi" id="256223"/>
<dbReference type="Pharos" id="A8MXV6">
    <property type="development level" value="Tdark"/>
</dbReference>
<dbReference type="PRO" id="PR:A8MXV6"/>
<dbReference type="Proteomes" id="UP000005640">
    <property type="component" value="Chromosome 17"/>
</dbReference>
<dbReference type="RNAct" id="A8MXV6">
    <property type="molecule type" value="protein"/>
</dbReference>
<dbReference type="Bgee" id="ENSG00000214819">
    <property type="expression patterns" value="Expressed in sperm and 42 other cell types or tissues"/>
</dbReference>
<dbReference type="ExpressionAtlas" id="A8MXV6">
    <property type="expression patterns" value="baseline and differential"/>
</dbReference>
<dbReference type="GO" id="GO:0016020">
    <property type="term" value="C:membrane"/>
    <property type="evidence" value="ECO:0007669"/>
    <property type="project" value="UniProtKB-SubCell"/>
</dbReference>
<dbReference type="PANTHER" id="PTHR16471">
    <property type="entry name" value="CMT1A DUPLICATED REGION TRANSCRIPT 15 PROTEIN-LIKE PROTEIN"/>
    <property type="match status" value="1"/>
</dbReference>
<dbReference type="PANTHER" id="PTHR16471:SF0">
    <property type="entry name" value="CMT1A DUPLICATED REGION TRANSCRIPT 15 PROTEIN-LIKE PROTEIN"/>
    <property type="match status" value="1"/>
</dbReference>
<gene>
    <name type="primary">CDRT15L2</name>
</gene>
<evidence type="ECO:0000255" key="1"/>
<evidence type="ECO:0000256" key="2">
    <source>
        <dbReference type="SAM" id="MobiDB-lite"/>
    </source>
</evidence>
<evidence type="ECO:0000305" key="3"/>
<comment type="subcellular location">
    <subcellularLocation>
        <location evidence="3">Membrane</location>
        <topology evidence="3">Single-pass membrane protein</topology>
    </subcellularLocation>
</comment>
<name>CD15L_HUMAN</name>
<reference key="1">
    <citation type="journal article" date="2006" name="Nature">
        <title>DNA sequence of human chromosome 17 and analysis of rearrangement in the human lineage.</title>
        <authorList>
            <person name="Zody M.C."/>
            <person name="Garber M."/>
            <person name="Adams D.J."/>
            <person name="Sharpe T."/>
            <person name="Harrow J."/>
            <person name="Lupski J.R."/>
            <person name="Nicholson C."/>
            <person name="Searle S.M."/>
            <person name="Wilming L."/>
            <person name="Young S.K."/>
            <person name="Abouelleil A."/>
            <person name="Allen N.R."/>
            <person name="Bi W."/>
            <person name="Bloom T."/>
            <person name="Borowsky M.L."/>
            <person name="Bugalter B.E."/>
            <person name="Butler J."/>
            <person name="Chang J.L."/>
            <person name="Chen C.-K."/>
            <person name="Cook A."/>
            <person name="Corum B."/>
            <person name="Cuomo C.A."/>
            <person name="de Jong P.J."/>
            <person name="DeCaprio D."/>
            <person name="Dewar K."/>
            <person name="FitzGerald M."/>
            <person name="Gilbert J."/>
            <person name="Gibson R."/>
            <person name="Gnerre S."/>
            <person name="Goldstein S."/>
            <person name="Grafham D.V."/>
            <person name="Grocock R."/>
            <person name="Hafez N."/>
            <person name="Hagopian D.S."/>
            <person name="Hart E."/>
            <person name="Norman C.H."/>
            <person name="Humphray S."/>
            <person name="Jaffe D.B."/>
            <person name="Jones M."/>
            <person name="Kamal M."/>
            <person name="Khodiyar V.K."/>
            <person name="LaButti K."/>
            <person name="Laird G."/>
            <person name="Lehoczky J."/>
            <person name="Liu X."/>
            <person name="Lokyitsang T."/>
            <person name="Loveland J."/>
            <person name="Lui A."/>
            <person name="Macdonald P."/>
            <person name="Major J.E."/>
            <person name="Matthews L."/>
            <person name="Mauceli E."/>
            <person name="McCarroll S.A."/>
            <person name="Mihalev A.H."/>
            <person name="Mudge J."/>
            <person name="Nguyen C."/>
            <person name="Nicol R."/>
            <person name="O'Leary S.B."/>
            <person name="Osoegawa K."/>
            <person name="Schwartz D.C."/>
            <person name="Shaw-Smith C."/>
            <person name="Stankiewicz P."/>
            <person name="Steward C."/>
            <person name="Swarbreck D."/>
            <person name="Venkataraman V."/>
            <person name="Whittaker C.A."/>
            <person name="Yang X."/>
            <person name="Zimmer A.R."/>
            <person name="Bradley A."/>
            <person name="Hubbard T."/>
            <person name="Birren B.W."/>
            <person name="Rogers J."/>
            <person name="Lander E.S."/>
            <person name="Nusbaum C."/>
        </authorList>
    </citation>
    <scope>NUCLEOTIDE SEQUENCE [LARGE SCALE GENOMIC DNA]</scope>
</reference>
<reference key="2">
    <citation type="submission" date="2000-03" db="EMBL/GenBank/DDBJ databases">
        <title>The WashU-Merck EST project.</title>
        <authorList>
            <person name="Hillier L."/>
            <person name="Clark N."/>
            <person name="Dubuque T."/>
            <person name="Elliston K."/>
            <person name="Hawkins M."/>
            <person name="Holman M."/>
            <person name="Hultman M."/>
            <person name="Kucaba T."/>
            <person name="Le M."/>
            <person name="Lennon G."/>
            <person name="Marra M."/>
            <person name="Parsons J."/>
            <person name="Rifkin L."/>
            <person name="Rohlfing T."/>
            <person name="Soares M."/>
            <person name="Tan F."/>
            <person name="Trevaskis E."/>
            <person name="Waterston R."/>
            <person name="Williamson A."/>
            <person name="Wohldmann P."/>
            <person name="Wilson R."/>
        </authorList>
    </citation>
    <scope>NUCLEOTIDE SEQUENCE [LARGE SCALE MRNA] OF 1-189</scope>
</reference>
<accession>A8MXV6</accession>
<sequence>MFSCCFPTSRGCCFRNGGSESLFRQCRRRLIPHPRRLWPFVRRRTQVPQDSPGQALAGQATPEIPSGLPLHIVLVQEEIREPMEAQTHAPGPYADIAALAAPAVEPKPAWEEPPPERALEVEGAPAKDQPSQELPEIMAPTVATGLNAGAENVAGERSGREGVTSTAPASRSHAAPSPGHGGKHGGGDQGIQTGLLYLAGERLLSFAGTTALLLQGLFIVLILVGYISVKVMLKSIKTRLGRRVPAAPPALRRNLLLQAWKCVCNWASRLFAPNVLPRTGS</sequence>
<protein>
    <recommendedName>
        <fullName>CMT1A duplicated region transcript 15 protein-like protein</fullName>
    </recommendedName>
</protein>